<dbReference type="EC" id="3.5.4.19" evidence="1"/>
<dbReference type="EMBL" id="CP000474">
    <property type="protein sequence ID" value="ABM09983.1"/>
    <property type="molecule type" value="Genomic_DNA"/>
</dbReference>
<dbReference type="RefSeq" id="WP_011774529.1">
    <property type="nucleotide sequence ID" value="NC_008711.1"/>
</dbReference>
<dbReference type="SMR" id="A1R5S3"/>
<dbReference type="STRING" id="290340.AAur_1834"/>
<dbReference type="KEGG" id="aau:AAur_1834"/>
<dbReference type="eggNOG" id="COG0139">
    <property type="taxonomic scope" value="Bacteria"/>
</dbReference>
<dbReference type="HOGENOM" id="CLU_048577_5_1_11"/>
<dbReference type="OrthoDB" id="9795769at2"/>
<dbReference type="UniPathway" id="UPA00031">
    <property type="reaction ID" value="UER00008"/>
</dbReference>
<dbReference type="Proteomes" id="UP000000637">
    <property type="component" value="Chromosome"/>
</dbReference>
<dbReference type="GO" id="GO:0005737">
    <property type="term" value="C:cytoplasm"/>
    <property type="evidence" value="ECO:0007669"/>
    <property type="project" value="UniProtKB-SubCell"/>
</dbReference>
<dbReference type="GO" id="GO:0000287">
    <property type="term" value="F:magnesium ion binding"/>
    <property type="evidence" value="ECO:0007669"/>
    <property type="project" value="UniProtKB-UniRule"/>
</dbReference>
<dbReference type="GO" id="GO:0004635">
    <property type="term" value="F:phosphoribosyl-AMP cyclohydrolase activity"/>
    <property type="evidence" value="ECO:0007669"/>
    <property type="project" value="UniProtKB-UniRule"/>
</dbReference>
<dbReference type="GO" id="GO:0008270">
    <property type="term" value="F:zinc ion binding"/>
    <property type="evidence" value="ECO:0007669"/>
    <property type="project" value="UniProtKB-UniRule"/>
</dbReference>
<dbReference type="GO" id="GO:0000105">
    <property type="term" value="P:L-histidine biosynthetic process"/>
    <property type="evidence" value="ECO:0007669"/>
    <property type="project" value="UniProtKB-UniRule"/>
</dbReference>
<dbReference type="FunFam" id="3.10.20.810:FF:000001">
    <property type="entry name" value="Histidine biosynthesis bifunctional protein HisIE"/>
    <property type="match status" value="1"/>
</dbReference>
<dbReference type="Gene3D" id="3.10.20.810">
    <property type="entry name" value="Phosphoribosyl-AMP cyclohydrolase"/>
    <property type="match status" value="1"/>
</dbReference>
<dbReference type="HAMAP" id="MF_01021">
    <property type="entry name" value="HisI"/>
    <property type="match status" value="1"/>
</dbReference>
<dbReference type="InterPro" id="IPR026660">
    <property type="entry name" value="PRA-CH"/>
</dbReference>
<dbReference type="InterPro" id="IPR002496">
    <property type="entry name" value="PRib_AMP_CycHydrolase_dom"/>
</dbReference>
<dbReference type="InterPro" id="IPR038019">
    <property type="entry name" value="PRib_AMP_CycHydrolase_sf"/>
</dbReference>
<dbReference type="NCBIfam" id="NF000768">
    <property type="entry name" value="PRK00051.1"/>
    <property type="match status" value="1"/>
</dbReference>
<dbReference type="PANTHER" id="PTHR42945">
    <property type="entry name" value="HISTIDINE BIOSYNTHESIS BIFUNCTIONAL PROTEIN"/>
    <property type="match status" value="1"/>
</dbReference>
<dbReference type="PANTHER" id="PTHR42945:SF11">
    <property type="entry name" value="PHOSPHORIBOSYL-AMP CYCLOHYDROLASE"/>
    <property type="match status" value="1"/>
</dbReference>
<dbReference type="Pfam" id="PF01502">
    <property type="entry name" value="PRA-CH"/>
    <property type="match status" value="1"/>
</dbReference>
<dbReference type="SUPFAM" id="SSF141734">
    <property type="entry name" value="HisI-like"/>
    <property type="match status" value="1"/>
</dbReference>
<accession>A1R5S3</accession>
<protein>
    <recommendedName>
        <fullName evidence="1">Phosphoribosyl-AMP cyclohydrolase</fullName>
        <shortName evidence="1">PRA-CH</shortName>
        <ecNumber evidence="1">3.5.4.19</ecNumber>
    </recommendedName>
</protein>
<comment type="function">
    <text evidence="1">Catalyzes the hydrolysis of the adenine ring of phosphoribosyl-AMP.</text>
</comment>
<comment type="catalytic activity">
    <reaction evidence="1">
        <text>1-(5-phospho-beta-D-ribosyl)-5'-AMP + H2O = 1-(5-phospho-beta-D-ribosyl)-5-[(5-phospho-beta-D-ribosylamino)methylideneamino]imidazole-4-carboxamide</text>
        <dbReference type="Rhea" id="RHEA:20049"/>
        <dbReference type="ChEBI" id="CHEBI:15377"/>
        <dbReference type="ChEBI" id="CHEBI:58435"/>
        <dbReference type="ChEBI" id="CHEBI:59457"/>
        <dbReference type="EC" id="3.5.4.19"/>
    </reaction>
</comment>
<comment type="cofactor">
    <cofactor evidence="1">
        <name>Mg(2+)</name>
        <dbReference type="ChEBI" id="CHEBI:18420"/>
    </cofactor>
    <text evidence="1">Binds 1 Mg(2+) ion per subunit.</text>
</comment>
<comment type="cofactor">
    <cofactor evidence="1">
        <name>Zn(2+)</name>
        <dbReference type="ChEBI" id="CHEBI:29105"/>
    </cofactor>
    <text evidence="1">Binds 1 zinc ion per subunit.</text>
</comment>
<comment type="pathway">
    <text evidence="1">Amino-acid biosynthesis; L-histidine biosynthesis; L-histidine from 5-phospho-alpha-D-ribose 1-diphosphate: step 3/9.</text>
</comment>
<comment type="subunit">
    <text evidence="1">Homodimer.</text>
</comment>
<comment type="subcellular location">
    <subcellularLocation>
        <location evidence="1">Cytoplasm</location>
    </subcellularLocation>
</comment>
<comment type="similarity">
    <text evidence="1">Belongs to the PRA-CH family.</text>
</comment>
<reference key="1">
    <citation type="journal article" date="2006" name="PLoS Genet.">
        <title>Secrets of soil survival revealed by the genome sequence of Arthrobacter aurescens TC1.</title>
        <authorList>
            <person name="Mongodin E.F."/>
            <person name="Shapir N."/>
            <person name="Daugherty S.C."/>
            <person name="DeBoy R.T."/>
            <person name="Emerson J.B."/>
            <person name="Shvartzbeyn A."/>
            <person name="Radune D."/>
            <person name="Vamathevan J."/>
            <person name="Riggs F."/>
            <person name="Grinberg V."/>
            <person name="Khouri H.M."/>
            <person name="Wackett L.P."/>
            <person name="Nelson K.E."/>
            <person name="Sadowsky M.J."/>
        </authorList>
    </citation>
    <scope>NUCLEOTIDE SEQUENCE [LARGE SCALE GENOMIC DNA]</scope>
    <source>
        <strain>TC1</strain>
    </source>
</reference>
<organism>
    <name type="scientific">Paenarthrobacter aurescens (strain TC1)</name>
    <dbReference type="NCBI Taxonomy" id="290340"/>
    <lineage>
        <taxon>Bacteria</taxon>
        <taxon>Bacillati</taxon>
        <taxon>Actinomycetota</taxon>
        <taxon>Actinomycetes</taxon>
        <taxon>Micrococcales</taxon>
        <taxon>Micrococcaceae</taxon>
        <taxon>Paenarthrobacter</taxon>
    </lineage>
</organism>
<gene>
    <name evidence="1" type="primary">hisI</name>
    <name type="ordered locus">AAur_1834</name>
</gene>
<feature type="chain" id="PRO_1000063386" description="Phosphoribosyl-AMP cyclohydrolase">
    <location>
        <begin position="1"/>
        <end position="138"/>
    </location>
</feature>
<feature type="region of interest" description="Disordered" evidence="2">
    <location>
        <begin position="1"/>
        <end position="23"/>
    </location>
</feature>
<feature type="binding site" evidence="1">
    <location>
        <position position="100"/>
    </location>
    <ligand>
        <name>Mg(2+)</name>
        <dbReference type="ChEBI" id="CHEBI:18420"/>
    </ligand>
</feature>
<feature type="binding site" evidence="1">
    <location>
        <position position="101"/>
    </location>
    <ligand>
        <name>Zn(2+)</name>
        <dbReference type="ChEBI" id="CHEBI:29105"/>
        <note>ligand shared between dimeric partners</note>
    </ligand>
</feature>
<feature type="binding site" evidence="1">
    <location>
        <position position="102"/>
    </location>
    <ligand>
        <name>Mg(2+)</name>
        <dbReference type="ChEBI" id="CHEBI:18420"/>
    </ligand>
</feature>
<feature type="binding site" evidence="1">
    <location>
        <position position="104"/>
    </location>
    <ligand>
        <name>Mg(2+)</name>
        <dbReference type="ChEBI" id="CHEBI:18420"/>
    </ligand>
</feature>
<feature type="binding site" evidence="1">
    <location>
        <position position="117"/>
    </location>
    <ligand>
        <name>Zn(2+)</name>
        <dbReference type="ChEBI" id="CHEBI:29105"/>
        <note>ligand shared between dimeric partners</note>
    </ligand>
</feature>
<feature type="binding site" evidence="1">
    <location>
        <position position="124"/>
    </location>
    <ligand>
        <name>Zn(2+)</name>
        <dbReference type="ChEBI" id="CHEBI:29105"/>
        <note>ligand shared between dimeric partners</note>
    </ligand>
</feature>
<proteinExistence type="inferred from homology"/>
<name>HIS3_PAEAT</name>
<sequence>MSEQSAPSPTPAAELSSDPASPLPQEIASALKRDSSGLVAAIVQQHDTNEVLMLGWMDDEALHRTMTSGRVTFYSRSRQEYWRKGDTSGHVQFVKSVALDCDGDALLIRVDQIGAACHTGTRTCFDGRDFTVVTGHRE</sequence>
<keyword id="KW-0028">Amino-acid biosynthesis</keyword>
<keyword id="KW-0963">Cytoplasm</keyword>
<keyword id="KW-0368">Histidine biosynthesis</keyword>
<keyword id="KW-0378">Hydrolase</keyword>
<keyword id="KW-0460">Magnesium</keyword>
<keyword id="KW-0479">Metal-binding</keyword>
<keyword id="KW-0862">Zinc</keyword>
<evidence type="ECO:0000255" key="1">
    <source>
        <dbReference type="HAMAP-Rule" id="MF_01021"/>
    </source>
</evidence>
<evidence type="ECO:0000256" key="2">
    <source>
        <dbReference type="SAM" id="MobiDB-lite"/>
    </source>
</evidence>